<feature type="chain" id="PRO_0000059394" description="Fibril-forming collagen alpha chain">
    <location>
        <begin position="1" status="less than"/>
        <end position="1027" status="greater than"/>
    </location>
</feature>
<feature type="region of interest" description="Disordered" evidence="2">
    <location>
        <begin position="1"/>
        <end position="1027"/>
    </location>
</feature>
<feature type="region of interest" description="Nonhelical region (N-terminal)">
    <location>
        <begin position="1"/>
        <end position="12"/>
    </location>
</feature>
<feature type="region of interest" description="Triple-helical region">
    <location>
        <begin position="13"/>
        <end position="1023"/>
    </location>
</feature>
<feature type="region of interest" description="Nonhelical region (C-terminal)">
    <location>
        <begin position="1024"/>
        <end position="1027"/>
    </location>
</feature>
<feature type="compositionally biased region" description="Pro residues" evidence="2">
    <location>
        <begin position="17"/>
        <end position="26"/>
    </location>
</feature>
<feature type="compositionally biased region" description="Basic and acidic residues" evidence="2">
    <location>
        <begin position="63"/>
        <end position="72"/>
    </location>
</feature>
<feature type="compositionally biased region" description="Gly residues" evidence="2">
    <location>
        <begin position="73"/>
        <end position="91"/>
    </location>
</feature>
<feature type="compositionally biased region" description="Low complexity" evidence="2">
    <location>
        <begin position="168"/>
        <end position="182"/>
    </location>
</feature>
<feature type="compositionally biased region" description="Low complexity" evidence="2">
    <location>
        <begin position="227"/>
        <end position="249"/>
    </location>
</feature>
<feature type="compositionally biased region" description="Gly residues" evidence="2">
    <location>
        <begin position="259"/>
        <end position="268"/>
    </location>
</feature>
<feature type="compositionally biased region" description="Basic and acidic residues" evidence="2">
    <location>
        <begin position="380"/>
        <end position="396"/>
    </location>
</feature>
<feature type="compositionally biased region" description="Low complexity" evidence="2">
    <location>
        <begin position="398"/>
        <end position="420"/>
    </location>
</feature>
<feature type="compositionally biased region" description="Basic and acidic residues" evidence="2">
    <location>
        <begin position="437"/>
        <end position="446"/>
    </location>
</feature>
<feature type="compositionally biased region" description="Low complexity" evidence="2">
    <location>
        <begin position="447"/>
        <end position="480"/>
    </location>
</feature>
<feature type="compositionally biased region" description="Gly residues" evidence="2">
    <location>
        <begin position="502"/>
        <end position="511"/>
    </location>
</feature>
<feature type="compositionally biased region" description="Low complexity" evidence="2">
    <location>
        <begin position="527"/>
        <end position="543"/>
    </location>
</feature>
<feature type="compositionally biased region" description="Basic and acidic residues" evidence="2">
    <location>
        <begin position="575"/>
        <end position="599"/>
    </location>
</feature>
<feature type="compositionally biased region" description="Low complexity" evidence="2">
    <location>
        <begin position="635"/>
        <end position="644"/>
    </location>
</feature>
<feature type="compositionally biased region" description="Low complexity" evidence="2">
    <location>
        <begin position="698"/>
        <end position="710"/>
    </location>
</feature>
<feature type="compositionally biased region" description="Pro residues" evidence="2">
    <location>
        <begin position="714"/>
        <end position="726"/>
    </location>
</feature>
<feature type="compositionally biased region" description="Basic and acidic residues" evidence="2">
    <location>
        <begin position="750"/>
        <end position="771"/>
    </location>
</feature>
<feature type="compositionally biased region" description="Gly residues" evidence="2">
    <location>
        <begin position="802"/>
        <end position="814"/>
    </location>
</feature>
<feature type="compositionally biased region" description="Low complexity" evidence="2">
    <location>
        <begin position="828"/>
        <end position="848"/>
    </location>
</feature>
<feature type="compositionally biased region" description="Low complexity" evidence="2">
    <location>
        <begin position="884"/>
        <end position="894"/>
    </location>
</feature>
<feature type="compositionally biased region" description="Low complexity" evidence="2">
    <location>
        <begin position="911"/>
        <end position="927"/>
    </location>
</feature>
<feature type="compositionally biased region" description="Low complexity" evidence="2">
    <location>
        <begin position="942"/>
        <end position="962"/>
    </location>
</feature>
<feature type="compositionally biased region" description="Gly residues" evidence="2">
    <location>
        <begin position="973"/>
        <end position="982"/>
    </location>
</feature>
<feature type="compositionally biased region" description="Low complexity" evidence="2">
    <location>
        <begin position="983"/>
        <end position="1001"/>
    </location>
</feature>
<feature type="compositionally biased region" description="Pro residues" evidence="2">
    <location>
        <begin position="1010"/>
        <end position="1020"/>
    </location>
</feature>
<feature type="site" description="Imperfection in the GAA repeat">
    <location>
        <position position="610"/>
    </location>
</feature>
<feature type="modified residue" description="4-hydroxyproline; partial" evidence="3">
    <location>
        <position position="21"/>
    </location>
</feature>
<feature type="modified residue" description="4-hydroxyproline; partial" evidence="3">
    <location>
        <position position="24"/>
    </location>
</feature>
<feature type="modified residue" description="4-hydroxyproline" evidence="3">
    <location>
        <position position="27"/>
    </location>
</feature>
<feature type="modified residue" description="4-hydroxyproline" evidence="3">
    <location>
        <position position="39"/>
    </location>
</feature>
<feature type="modified residue" description="3-hydroxyproline; partial" evidence="3">
    <location>
        <position position="53"/>
    </location>
</feature>
<feature type="modified residue" description="4-hydroxyproline" evidence="3">
    <location>
        <position position="54"/>
    </location>
</feature>
<feature type="modified residue" description="4-hydroxyproline; partial" evidence="3">
    <location>
        <position position="72"/>
    </location>
</feature>
<feature type="modified residue" description="4-hydroxyproline" evidence="3">
    <location>
        <position position="90"/>
    </location>
</feature>
<feature type="modified residue" description="4-hydroxyproline" evidence="3">
    <location>
        <position position="93"/>
    </location>
</feature>
<feature type="modified residue" description="5-hydroxylysine" evidence="5">
    <location>
        <position position="96"/>
    </location>
</feature>
<feature type="modified residue" description="5-hydroxylysine" evidence="5">
    <location>
        <position position="108"/>
    </location>
</feature>
<feature type="modified residue" description="4-hydroxyproline; partial" evidence="3">
    <location>
        <position position="123"/>
    </location>
</feature>
<feature type="modified residue" description="4-hydroxyproline; partial" evidence="3">
    <location>
        <position position="128"/>
    </location>
</feature>
<feature type="modified residue" description="4-hydroxyproline" evidence="3">
    <location>
        <position position="150"/>
    </location>
</feature>
<feature type="modified residue" description="3-hydroxyproline; partial" evidence="3">
    <location>
        <position position="161"/>
    </location>
</feature>
<feature type="modified residue" description="4-hydroxyproline" evidence="3">
    <location>
        <position position="162"/>
    </location>
</feature>
<feature type="modified residue" description="3-hydroxyproline; partial" evidence="3">
    <location>
        <position position="164"/>
    </location>
</feature>
<feature type="modified residue" description="4-hydroxyproline" evidence="3">
    <location>
        <position position="165"/>
    </location>
</feature>
<feature type="modified residue" description="4-hydroxyproline" evidence="3">
    <location>
        <position position="174"/>
    </location>
</feature>
<feature type="modified residue" description="4-hydroxyproline" evidence="3">
    <location>
        <position position="177"/>
    </location>
</feature>
<feature type="modified residue" description="4-hydroxyproline" evidence="3">
    <location>
        <position position="180"/>
    </location>
</feature>
<feature type="modified residue" description="5-hydroxylysine" evidence="3">
    <location>
        <position position="183"/>
    </location>
</feature>
<feature type="modified residue" description="5-hydroxylysine" evidence="5">
    <location>
        <position position="192"/>
    </location>
</feature>
<feature type="modified residue" description="4-hydroxyproline" evidence="3">
    <location>
        <position position="207"/>
    </location>
</feature>
<feature type="modified residue" description="4-hydroxyproline" evidence="3">
    <location>
        <position position="216"/>
    </location>
</feature>
<feature type="modified residue" description="4-hydroxyproline" evidence="3">
    <location>
        <position position="219"/>
    </location>
</feature>
<feature type="modified residue" description="4-hydroxyproline" evidence="3">
    <location>
        <position position="228"/>
    </location>
</feature>
<feature type="modified residue" description="4-hydroxyproline" evidence="3">
    <location>
        <position position="237"/>
    </location>
</feature>
<feature type="modified residue" description="4-hydroxyproline; partial" evidence="3">
    <location>
        <position position="243"/>
    </location>
</feature>
<feature type="modified residue" description="4-hydroxyproline" evidence="3">
    <location>
        <position position="249"/>
    </location>
</feature>
<feature type="modified residue" description="4-hydroxyproline" evidence="3">
    <location>
        <position position="255"/>
    </location>
</feature>
<feature type="modified residue" description="5-hydroxylysine" evidence="5">
    <location>
        <position position="261"/>
    </location>
</feature>
<feature type="modified residue" description="4-hydroxyproline; partial" evidence="3">
    <location>
        <position position="273"/>
    </location>
</feature>
<feature type="modified residue" description="4-hydroxyproline; partial" evidence="3">
    <location>
        <position position="276"/>
    </location>
</feature>
<feature type="modified residue" description="5-hydroxylysine" evidence="5">
    <location>
        <position position="279"/>
    </location>
</feature>
<feature type="modified residue" description="4-hydroxyproline; partial" evidence="3">
    <location>
        <position position="285"/>
    </location>
</feature>
<feature type="modified residue" description="4-hydroxyproline; partial" evidence="3">
    <location>
        <position position="291"/>
    </location>
</feature>
<feature type="modified residue" description="4-hydroxyproline; partial" evidence="3">
    <location>
        <position position="303"/>
    </location>
</feature>
<feature type="modified residue" description="4-hydroxyproline" evidence="3">
    <location>
        <position position="306"/>
    </location>
</feature>
<feature type="modified residue" description="4-hydroxyproline" evidence="3">
    <location>
        <position position="312"/>
    </location>
</feature>
<feature type="modified residue" description="4-hydroxyproline" evidence="3">
    <location>
        <position position="321"/>
    </location>
</feature>
<feature type="modified residue" description="4-hydroxyproline" evidence="3">
    <location>
        <position position="327"/>
    </location>
</feature>
<feature type="modified residue" description="4-hydroxyproline" evidence="3">
    <location>
        <position position="339"/>
    </location>
</feature>
<feature type="modified residue" description="5-hydroxylysine" evidence="3">
    <location>
        <position position="342"/>
    </location>
</feature>
<feature type="modified residue" description="4-hydroxyproline; partial" evidence="3">
    <location>
        <position position="348"/>
    </location>
</feature>
<feature type="modified residue" description="5-hydroxylysine; partial" evidence="3">
    <location>
        <position position="351"/>
    </location>
</feature>
<feature type="modified residue" description="4-hydroxyproline" evidence="3">
    <location>
        <position position="366"/>
    </location>
</feature>
<feature type="modified residue" description="4-hydroxyproline" evidence="3">
    <location>
        <position position="372"/>
    </location>
</feature>
<feature type="modified residue" description="4-hydroxyproline" evidence="3">
    <location>
        <position position="375"/>
    </location>
</feature>
<feature type="modified residue" description="4-hydroxyproline; partial" evidence="3">
    <location>
        <position position="381"/>
    </location>
</feature>
<feature type="modified residue" description="4-hydroxyproline" evidence="3">
    <location>
        <position position="387"/>
    </location>
</feature>
<feature type="modified residue" description="3-hydroxyproline; partial" evidence="3">
    <location>
        <position position="416"/>
    </location>
</feature>
<feature type="modified residue" description="4-hydroxyproline" evidence="3">
    <location>
        <position position="417"/>
    </location>
</feature>
<feature type="modified residue" description="4-hydroxyproline" evidence="3">
    <location>
        <position position="423"/>
    </location>
</feature>
<feature type="modified residue" description="4-hydroxyproline" evidence="3">
    <location>
        <position position="429"/>
    </location>
</feature>
<feature type="modified residue" description="4-hydroxyproline" evidence="3">
    <location>
        <position position="432"/>
    </location>
</feature>
<feature type="modified residue" description="4-hydroxyproline" evidence="3">
    <location>
        <position position="453"/>
    </location>
</feature>
<feature type="modified residue" description="4-hydroxyproline" evidence="3">
    <location>
        <position position="465"/>
    </location>
</feature>
<feature type="modified residue" description="4-hydroxyproline" evidence="3">
    <location>
        <position position="483"/>
    </location>
</feature>
<feature type="modified residue" description="4-hydroxyproline; partial" evidence="3">
    <location>
        <position position="500"/>
    </location>
</feature>
<feature type="modified residue" description="4-hydroxyproline; partial" evidence="3">
    <location>
        <position position="503"/>
    </location>
</feature>
<feature type="modified residue" description="4-hydroxyproline; partial" evidence="3">
    <location>
        <position position="506"/>
    </location>
</feature>
<feature type="modified residue" description="4-hydroxyproline" evidence="3">
    <location>
        <position position="513"/>
    </location>
</feature>
<feature type="modified residue" description="4-hydroxyproline" evidence="3">
    <location>
        <position position="525"/>
    </location>
</feature>
<feature type="modified residue" description="4-hydroxyproline; partial" evidence="3">
    <location>
        <position position="533"/>
    </location>
</feature>
<feature type="modified residue" description="4-hydroxyproline; partial" evidence="3">
    <location>
        <position position="536"/>
    </location>
</feature>
<feature type="modified residue" description="4-hydroxyproline" evidence="3">
    <location>
        <position position="540"/>
    </location>
</feature>
<feature type="modified residue" description="5-hydroxylysine" evidence="3">
    <location>
        <position position="546"/>
    </location>
</feature>
<feature type="modified residue" description="3-hydroxyproline; partial" evidence="3">
    <location>
        <position position="551"/>
    </location>
</feature>
<feature type="modified residue" description="4-hydroxyproline" evidence="3">
    <location>
        <position position="552"/>
    </location>
</feature>
<feature type="modified residue" description="4-hydroxyproline" evidence="3">
    <location>
        <position position="561"/>
    </location>
</feature>
<feature type="modified residue" description="5-hydroxylysine" evidence="3">
    <location>
        <position position="567"/>
    </location>
</feature>
<feature type="modified residue" description="5-hydroxylysine" evidence="5">
    <location>
        <position position="573"/>
    </location>
</feature>
<feature type="modified residue" description="4-hydroxyproline" evidence="3">
    <location>
        <position position="603"/>
    </location>
</feature>
<feature type="modified residue" description="5-hydroxylysine" evidence="5">
    <location>
        <position position="612"/>
    </location>
</feature>
<feature type="modified residue" description="4-hydroxyproline; partial" evidence="3">
    <location>
        <position position="621"/>
    </location>
</feature>
<feature type="modified residue" description="4-hydroxyproline" evidence="3">
    <location>
        <position position="627"/>
    </location>
</feature>
<feature type="modified residue" description="4-hydroxyproline; partial" evidence="3">
    <location>
        <position position="645"/>
    </location>
</feature>
<feature type="modified residue" description="3-hydroxyproline; partial" evidence="3">
    <location>
        <position position="647"/>
    </location>
</feature>
<feature type="modified residue" description="4-hydroxyproline" evidence="3">
    <location>
        <position position="648"/>
    </location>
</feature>
<feature type="modified residue" description="5-hydroxylysine" evidence="5">
    <location>
        <position position="657"/>
    </location>
</feature>
<feature type="modified residue" description="4-hydroxyproline" evidence="3">
    <location>
        <position position="663"/>
    </location>
</feature>
<feature type="modified residue" description="4-hydroxyproline" evidence="3">
    <location>
        <position position="708"/>
    </location>
</feature>
<feature type="modified residue" description="4-hydroxyproline" evidence="3">
    <location>
        <position position="711"/>
    </location>
</feature>
<feature type="modified residue" description="4-hydroxyproline" evidence="3">
    <location>
        <position position="714"/>
    </location>
</feature>
<feature type="modified residue" description="4-hydroxyproline" evidence="3">
    <location>
        <position position="717"/>
    </location>
</feature>
<feature type="modified residue" description="4-hydroxyproline" evidence="3">
    <location>
        <position position="723"/>
    </location>
</feature>
<feature type="modified residue" description="5-hydroxylysine" evidence="5">
    <location>
        <position position="738"/>
    </location>
</feature>
<feature type="modified residue" description="4-hydroxyproline" evidence="3">
    <location>
        <position position="744"/>
    </location>
</feature>
<feature type="modified residue" description="4-hydroxyproline" evidence="3">
    <location>
        <position position="759"/>
    </location>
</feature>
<feature type="modified residue" description="5-hydroxylysine" evidence="5">
    <location>
        <position position="765"/>
    </location>
</feature>
<feature type="modified residue" description="3-hydroxyproline; partial" evidence="3">
    <location>
        <position position="773"/>
    </location>
</feature>
<feature type="modified residue" description="4-hydroxyproline" evidence="3">
    <location>
        <position position="774"/>
    </location>
</feature>
<feature type="modified residue" description="4-hydroxyproline" evidence="3">
    <location>
        <position position="783"/>
    </location>
</feature>
<feature type="modified residue" description="4-hydroxyproline" evidence="3">
    <location>
        <position position="792"/>
    </location>
</feature>
<feature type="modified residue" description="5-hydroxylysine" evidence="5">
    <location>
        <position position="810"/>
    </location>
</feature>
<feature type="modified residue" description="3-hydroxyproline; partial" evidence="3">
    <location>
        <position position="815"/>
    </location>
</feature>
<feature type="modified residue" description="4-hydroxyproline" evidence="3">
    <location>
        <position position="816"/>
    </location>
</feature>
<feature type="modified residue" description="4-hydroxyproline" evidence="3">
    <location>
        <position position="843"/>
    </location>
</feature>
<feature type="modified residue" description="4-hydroxyproline" evidence="3">
    <location>
        <position position="849"/>
    </location>
</feature>
<feature type="modified residue" description="4-hydroxyproline" evidence="3">
    <location>
        <position position="855"/>
    </location>
</feature>
<feature type="modified residue" description="4-hydroxyproline" evidence="3">
    <location>
        <position position="861"/>
    </location>
</feature>
<feature type="modified residue" description="4-hydroxyproline" evidence="3">
    <location>
        <position position="867"/>
    </location>
</feature>
<feature type="modified residue" description="4-hydroxyproline" evidence="3">
    <location>
        <position position="888"/>
    </location>
</feature>
<feature type="modified residue" description="4-hydroxyproline" evidence="3">
    <location>
        <position position="894"/>
    </location>
</feature>
<feature type="modified residue" description="4-hydroxyproline" evidence="3">
    <location>
        <position position="903"/>
    </location>
</feature>
<feature type="modified residue" description="4-hydroxyproline" evidence="3">
    <location>
        <position position="915"/>
    </location>
</feature>
<feature type="modified residue" description="5-hydroxylysine" evidence="5">
    <location>
        <position position="927"/>
    </location>
</feature>
<feature type="modified residue" description="5-hydroxylysine; partial" evidence="3">
    <location>
        <position position="933"/>
    </location>
</feature>
<feature type="modified residue" description="5-hydroxylysine" evidence="5">
    <location>
        <position position="936"/>
    </location>
</feature>
<feature type="modified residue" description="5-hydroxylysine" evidence="3">
    <location>
        <position position="939"/>
    </location>
</feature>
<feature type="modified residue" description="4-hydroxyproline" evidence="3">
    <location>
        <position position="945"/>
    </location>
</feature>
<feature type="modified residue" description="4-hydroxyproline; partial" evidence="3">
    <location>
        <position position="954"/>
    </location>
</feature>
<feature type="modified residue" description="4-hydroxyproline" evidence="3">
    <location>
        <position position="963"/>
    </location>
</feature>
<feature type="modified residue" description="4-hydroxyproline" evidence="3">
    <location>
        <position position="966"/>
    </location>
</feature>
<feature type="modified residue" description="4-hydroxyproline" evidence="3">
    <location>
        <position position="984"/>
    </location>
</feature>
<feature type="modified residue" description="4-hydroxyproline" evidence="3">
    <location>
        <position position="990"/>
    </location>
</feature>
<feature type="modified residue" description="3-hydroxyproline; partial" evidence="3">
    <location>
        <position position="1010"/>
    </location>
</feature>
<feature type="modified residue" description="4-hydroxyproline" evidence="3">
    <location>
        <position position="1011"/>
    </location>
</feature>
<feature type="modified residue" description="3-hydroxyproline; partial" evidence="3">
    <location>
        <position position="1013"/>
    </location>
</feature>
<feature type="modified residue" description="4-hydroxyproline" evidence="3">
    <location>
        <position position="1014"/>
    </location>
</feature>
<feature type="modified residue" description="3-hydroxyproline; partial" evidence="3">
    <location>
        <position position="1016"/>
    </location>
</feature>
<feature type="modified residue" description="4-hydroxyproline" evidence="3">
    <location>
        <position position="1017"/>
    </location>
</feature>
<feature type="modified residue" description="3-hydroxyproline; partial" evidence="3">
    <location>
        <position position="1019"/>
    </location>
</feature>
<feature type="modified residue" description="4-hydroxyproline" evidence="3">
    <location>
        <position position="1020"/>
    </location>
</feature>
<feature type="glycosylation site" description="O-linked (Gal...) hydroxylysine" evidence="4">
    <location>
        <position position="96"/>
    </location>
</feature>
<feature type="glycosylation site" description="O-linked (Gal...) hydroxylysine" evidence="4">
    <location>
        <position position="108"/>
    </location>
</feature>
<feature type="glycosylation site" description="O-linked (Gal...) hydroxylysine" evidence="4">
    <location>
        <position position="192"/>
    </location>
</feature>
<feature type="glycosylation site" description="O-linked (Gal...) hydroxylysine" evidence="4">
    <location>
        <position position="261"/>
    </location>
</feature>
<feature type="glycosylation site" description="O-linked (Gal...) hydroxylysine" evidence="4">
    <location>
        <position position="279"/>
    </location>
</feature>
<feature type="glycosylation site" description="O-linked (Gal...) hydroxylysine" evidence="4">
    <location>
        <position position="573"/>
    </location>
</feature>
<feature type="glycosylation site" description="O-linked (Gal...) hydroxylysine" evidence="4">
    <location>
        <position position="612"/>
    </location>
</feature>
<feature type="glycosylation site" description="O-linked (Gal...) hydroxylysine" evidence="4">
    <location>
        <position position="657"/>
    </location>
</feature>
<feature type="glycosylation site" description="O-linked (Gal...) hydroxylysine" evidence="4">
    <location>
        <position position="738"/>
    </location>
</feature>
<feature type="glycosylation site" description="O-linked (Gal...) hydroxylysine" evidence="4">
    <location>
        <position position="765"/>
    </location>
</feature>
<feature type="glycosylation site" description="O-linked (Gal...) hydroxylysine" evidence="4">
    <location>
        <position position="810"/>
    </location>
</feature>
<feature type="glycosylation site" description="O-linked (Gal...) hydroxylysine" evidence="4">
    <location>
        <position position="927"/>
    </location>
</feature>
<feature type="glycosylation site" description="O-linked (Gal...) hydroxylysine" evidence="4">
    <location>
        <position position="936"/>
    </location>
</feature>
<feature type="sequence variant">
    <original>P</original>
    <variation>A</variation>
    <location>
        <position position="903"/>
    </location>
</feature>
<feature type="unsure residue">
    <location>
        <position position="96"/>
    </location>
</feature>
<feature type="unsure residue">
    <location>
        <position position="108"/>
    </location>
</feature>
<feature type="unsure residue">
    <location>
        <position position="192"/>
    </location>
</feature>
<feature type="unsure residue">
    <location>
        <position position="261"/>
    </location>
</feature>
<feature type="unsure residue">
    <location>
        <position position="279"/>
    </location>
</feature>
<feature type="unsure residue">
    <location>
        <position position="573"/>
    </location>
</feature>
<feature type="unsure residue">
    <location>
        <position position="612"/>
    </location>
</feature>
<feature type="unsure residue">
    <location>
        <position position="657"/>
    </location>
</feature>
<feature type="unsure residue">
    <location>
        <position position="738"/>
    </location>
</feature>
<feature type="unsure residue">
    <location>
        <position position="765"/>
    </location>
</feature>
<feature type="unsure residue">
    <location>
        <position position="810"/>
    </location>
</feature>
<feature type="unsure residue">
    <location>
        <position position="927"/>
    </location>
</feature>
<feature type="unsure residue">
    <location>
        <position position="936"/>
    </location>
</feature>
<feature type="non-terminal residue">
    <location>
        <position position="1"/>
    </location>
</feature>
<feature type="non-terminal residue">
    <location>
        <position position="1027"/>
    </location>
</feature>
<accession>P30754</accession>
<keyword id="KW-0176">Collagen</keyword>
<keyword id="KW-0903">Direct protein sequencing</keyword>
<keyword id="KW-0272">Extracellular matrix</keyword>
<keyword id="KW-0325">Glycoprotein</keyword>
<keyword id="KW-0379">Hydroxylation</keyword>
<keyword id="KW-0677">Repeat</keyword>
<keyword id="KW-0964">Secreted</keyword>
<evidence type="ECO:0000250" key="1"/>
<evidence type="ECO:0000256" key="2">
    <source>
        <dbReference type="SAM" id="MobiDB-lite"/>
    </source>
</evidence>
<evidence type="ECO:0000269" key="3">
    <source>
    </source>
</evidence>
<evidence type="ECO:0000305" key="4"/>
<evidence type="ECO:0000305" key="5">
    <source>
    </source>
</evidence>
<sequence length="1027" mass="94587">YRAGPRYIQAQVGPIGPRGPPGPPGSPGQQGYQGLRGEPGDSGPMGPIGKRGPPGPAGIAGKSGDDGRDGEPGPRGGIGPMGPRGAGGMPGMPGPKGHRGFRGLSGSKGEQGKSGNQGPDGGPGPAGPSGPIGPRGQTGERGRDGKSGLPGLRGVDGLAGPPGPPGPIGSTGSPGFPGTPGSKGDRGQSGIKGAQGLQGPVGLSGQPGVAGENGHPGMPGMDGANGEPGASGESGLPGPSGFPGPRGMPGTAGSPGQAGAKGDGGPTGEQGRPGAPGVKGSSGPPGDVGAPGHAGEAGKRGSPGSPGPAGSPGPQGDRGLPGSRGLPGMTGASGAMGIPGEKGPSGEPGAKGPTGDTGRQGNQGTPGIAGLPGNPGSDGRPGKDGRPGIRGKDGKQGEQGPQGPQGLAGLQGRAGPPGARGEPGKNGAPGEPGAHGEQGDAGKDGETGAAGPPGAAGPTGARGPPGPRGQQGFQGLAGAQGTPGEAGKTGERGAVGATGPSGPAGPGGERGAPGDRGNVGPRGMPGERGATGPAGPTGSPGVAGAKGQGGPPGPAGLVGLPGERGPKGVGGSKGSRGDIGPRGKAGERGKDGERGERGENGLPGPSGLAASKGERGDMGSPGERGSPGPAGERGPAGSQGIQGQPGPPGDAGPAGTKGDIGFPGERGTRGATGKQGARGPRGLAGKRGLRGAGGSRGETGAQGEIGLPGSPGQPGLPGPSGQPGPSGPAGTAGKQGVKGARGSPGLVGKQGDRGSDGEPGRDGTKGERGEDGPPGVSGPTGAPGQQGERGMPGMVGLRGETGPMGGQGMKGDGGPPGPSGDRGERGNAGPQGPTGPSGQAGAPGQEGAPGKDGLPGLAGRPGERGEPGVAGRAGSQGLAGLMGQRGLPGAAGPPGDRGERGEPGGQGVQGPVGAPGSQGPAGIMGMKGEAGGKGAKGDKGWTGLPGLQGLQGTPGHSGESGPPGAPGPRGARGEAGGRGSQGPPGKDGQPGPSGRVGPRGPSGDDGRSGPPGPPGPPGPPGNSDYGA</sequence>
<organism>
    <name type="scientific">Riftia pachyptila</name>
    <name type="common">Vent tube worm</name>
    <dbReference type="NCBI Taxonomy" id="6426"/>
    <lineage>
        <taxon>Eukaryota</taxon>
        <taxon>Metazoa</taxon>
        <taxon>Spiralia</taxon>
        <taxon>Lophotrochozoa</taxon>
        <taxon>Annelida</taxon>
        <taxon>Polychaeta</taxon>
        <taxon>Sedentaria</taxon>
        <taxon>Canalipalpata</taxon>
        <taxon>Sabellida</taxon>
        <taxon>Siboglinidae</taxon>
        <taxon>Riftia</taxon>
    </lineage>
</organism>
<dbReference type="PIR" id="S28774">
    <property type="entry name" value="S28774"/>
</dbReference>
<dbReference type="GO" id="GO:0005581">
    <property type="term" value="C:collagen trimer"/>
    <property type="evidence" value="ECO:0007669"/>
    <property type="project" value="UniProtKB-KW"/>
</dbReference>
<dbReference type="GO" id="GO:0031012">
    <property type="term" value="C:extracellular matrix"/>
    <property type="evidence" value="ECO:0007669"/>
    <property type="project" value="TreeGrafter"/>
</dbReference>
<dbReference type="GO" id="GO:0005615">
    <property type="term" value="C:extracellular space"/>
    <property type="evidence" value="ECO:0007669"/>
    <property type="project" value="TreeGrafter"/>
</dbReference>
<dbReference type="InterPro" id="IPR008160">
    <property type="entry name" value="Collagen"/>
</dbReference>
<dbReference type="InterPro" id="IPR050149">
    <property type="entry name" value="Collagen_superfamily"/>
</dbReference>
<dbReference type="PANTHER" id="PTHR24023">
    <property type="entry name" value="COLLAGEN ALPHA"/>
    <property type="match status" value="1"/>
</dbReference>
<dbReference type="PANTHER" id="PTHR24023:SF1082">
    <property type="entry name" value="COLLAGEN TRIPLE HELIX REPEAT"/>
    <property type="match status" value="1"/>
</dbReference>
<dbReference type="Pfam" id="PF01391">
    <property type="entry name" value="Collagen"/>
    <property type="match status" value="4"/>
</dbReference>
<name>CAFF_RIFPA</name>
<proteinExistence type="evidence at protein level"/>
<protein>
    <recommendedName>
        <fullName>Fibril-forming collagen alpha chain</fullName>
    </recommendedName>
</protein>
<comment type="function">
    <text>Fibril-forming collagen.</text>
</comment>
<comment type="subunit">
    <text>Homotetramer.</text>
</comment>
<comment type="subcellular location">
    <subcellularLocation>
        <location evidence="1">Secreted</location>
        <location evidence="1">Extracellular space</location>
        <location evidence="1">Extracellular matrix</location>
    </subcellularLocation>
</comment>
<reference key="1">
    <citation type="journal article" date="1992" name="Eur. J. Biochem.">
        <title>Amino-acid sequence and cell-adhesion activity of a fibril-forming collagen from the tube worm Riftia pachyptila living at deep sea hydrothermal vents.</title>
        <authorList>
            <person name="Mann K."/>
            <person name="Gaill F."/>
            <person name="Timpl R."/>
        </authorList>
    </citation>
    <scope>PROTEIN SEQUENCE</scope>
    <scope>HYDROXYLATION AT PRO-21; PRO-24; PRO-27; PRO-39; PRO-53; PRO-54; PRO-72; PRO-90; PRO-93; LYS-96; LYS-108; PRO-123; PRO-128; PRO-150; PRO-161; PRO-162; PRO-164; PRO-165; PRO-174; PRO-177; PRO-180; LYS-183; LYS-192; PRO-207; PRO-216; PRO-219; PRO-228; PRO-237; PRO-243; PRO-249; PRO-255; LYS-261; PRO-273; PRO-276; LYS-279; PRO-285; PRO-291; PRO-303; PRO-306; PRO-312; PRO-321; PRO-327; PRO-339; LYS-342; PRO-348; LYS-351; PRO-366; PRO-372; PRO-375; PRO-381; PRO-387; PRO-416; PRO-417; PRO-423; PRO-429; PRO-432; PRO-453; PRO-465; PRO-483; PRO-500; PRO-503; PRO-506; PRO-513; PRO-525; PRO-533; PRO-536; PRO-540; LYS-546; PRO-551; PRO-552; PRO-561; LYS-567; LYS-573; PRO-603; LYS-612; PRO-621; PRO-627; PRO-645; PRO-647; PRO-648; LYS-657; PRO-663; PRO-708; PRO-711; PRO-714; PRO-717; PRO-723; LYS-738; PRO-744; PRO-759; LYS-765; PRO-773; PRO-774; PRO-783; PRO-792; LYS-810; PRO-815; PRO-816; PRO-843; PRO-849; PRO-855; PRO-861; PRO-867; PRO-888; PRO-894; PRO-903; PRO-915; LYS-927; LYS-933; LYS-936; LYS-939; PRO-945; PRO-954; PRO-963; PRO-966; PRO-984; PRO-990; PRO-1010; PRO-1011; PRO-1013; PRO-1014; PRO-1016; PRO-1017; PRO-1019 AND PRO-1020</scope>
</reference>
<reference key="2">
    <citation type="journal article" date="1991" name="J. Mol. Biol.">
        <title>Molecular characterization of cuticle and interstitial collagens from worms collected at deep sea hydrothermal vents.</title>
        <authorList>
            <person name="Gaill F."/>
            <person name="Wiedemann H."/>
            <person name="Mann K."/>
            <person name="Kuhn K."/>
            <person name="Timpl R."/>
            <person name="Engel J."/>
        </authorList>
    </citation>
    <scope>PROTEIN SEQUENCE OF 8-45; 525-618 AND 810-882</scope>
    <source>
        <tissue>Cuticle</tissue>
    </source>
</reference>